<keyword id="KW-0963">Cytoplasm</keyword>
<keyword id="KW-0269">Exonuclease</keyword>
<keyword id="KW-0378">Hydrolase</keyword>
<keyword id="KW-0540">Nuclease</keyword>
<keyword id="KW-1185">Reference proteome</keyword>
<proteinExistence type="inferred from homology"/>
<accession>P54521</accession>
<gene>
    <name evidence="1" type="primary">xseA</name>
    <name type="synonym">yqiB</name>
    <name type="ordered locus">BSU24300</name>
</gene>
<sequence length="448" mass="51048">MGEAAYVTVSALTKYIKRKFDVDPHLENIWIKGELSNVKIHTRGHIYFTLKDENARMQSVMFARQSERLPFKPENGMKVLVRGGISVYEPSGNYQLYAKEMQPDGVGALYLAYEELKKKLAGEGLFDDRYKKQIPAFPATIGVVTSPTGAAVRDVITTLKRRYPLVKVIVLPALVQGENASRSIVTRIEEANEKEICDVLIVGRGGGSIEELWAFNEEIVARAIFASNIPIISAVGHETDFTISDFVADIRAATPTGAAEIAVPHTTDLIERTKTAEVRMTRAMQQHLGQKKERIQTLQSSYAFRFPKRLYAQKEQQFDLAYQQFQAQLTALLDRKSRQLERETYRLEALHPHEQLKQARTRYQEQTNQLRKNMNIQMKQLHSQFQTVLGKLNALSPLQVMERGYSLAYKEDKLIKSVSQIEEQDRLEIKLKDGVLTCEVLEKRGEEK</sequence>
<comment type="function">
    <text evidence="1">Bidirectionally degrades single-stranded DNA into large acid-insoluble oligonucleotides, which are then degraded further into small acid-soluble oligonucleotides.</text>
</comment>
<comment type="catalytic activity">
    <reaction evidence="1">
        <text>Exonucleolytic cleavage in either 5'- to 3'- or 3'- to 5'-direction to yield nucleoside 5'-phosphates.</text>
        <dbReference type="EC" id="3.1.11.6"/>
    </reaction>
</comment>
<comment type="subunit">
    <text evidence="1">Heterooligomer composed of large and small subunits.</text>
</comment>
<comment type="subcellular location">
    <subcellularLocation>
        <location evidence="1">Cytoplasm</location>
    </subcellularLocation>
    <subcellularLocation>
        <location evidence="2">Cytoplasm</location>
        <location evidence="2">Nucleoid</location>
    </subcellularLocation>
    <text evidence="2">Localizes in tight foci on the nucleoid; targeted to the nucleoid via the 35 C-terminal residues of SSB (ssbA) (PubMed:21170359).</text>
</comment>
<comment type="similarity">
    <text evidence="1">Belongs to the XseA family.</text>
</comment>
<name>EX7L_BACSU</name>
<protein>
    <recommendedName>
        <fullName evidence="1">Exodeoxyribonuclease 7 large subunit</fullName>
        <ecNumber evidence="1">3.1.11.6</ecNumber>
    </recommendedName>
    <alternativeName>
        <fullName evidence="1">Exodeoxyribonuclease VII large subunit</fullName>
        <shortName evidence="1">Exonuclease VII large subunit</shortName>
    </alternativeName>
</protein>
<dbReference type="EC" id="3.1.11.6" evidence="1"/>
<dbReference type="EMBL" id="D84432">
    <property type="protein sequence ID" value="BAA12573.1"/>
    <property type="molecule type" value="Genomic_DNA"/>
</dbReference>
<dbReference type="EMBL" id="AL009126">
    <property type="protein sequence ID" value="CAB14361.2"/>
    <property type="molecule type" value="Genomic_DNA"/>
</dbReference>
<dbReference type="PIR" id="G69960">
    <property type="entry name" value="G69960"/>
</dbReference>
<dbReference type="RefSeq" id="NP_390310.2">
    <property type="nucleotide sequence ID" value="NC_000964.3"/>
</dbReference>
<dbReference type="RefSeq" id="WP_003246103.1">
    <property type="nucleotide sequence ID" value="NZ_OZ025638.1"/>
</dbReference>
<dbReference type="SMR" id="P54521"/>
<dbReference type="FunCoup" id="P54521">
    <property type="interactions" value="562"/>
</dbReference>
<dbReference type="IntAct" id="P54521">
    <property type="interactions" value="36"/>
</dbReference>
<dbReference type="STRING" id="224308.BSU24300"/>
<dbReference type="PaxDb" id="224308-BSU24300"/>
<dbReference type="EnsemblBacteria" id="CAB14361">
    <property type="protein sequence ID" value="CAB14361"/>
    <property type="gene ID" value="BSU_24300"/>
</dbReference>
<dbReference type="GeneID" id="938650"/>
<dbReference type="KEGG" id="bsu:BSU24300"/>
<dbReference type="PATRIC" id="fig|224308.179.peg.2648"/>
<dbReference type="eggNOG" id="COG1570">
    <property type="taxonomic scope" value="Bacteria"/>
</dbReference>
<dbReference type="InParanoid" id="P54521"/>
<dbReference type="OrthoDB" id="9802795at2"/>
<dbReference type="PhylomeDB" id="P54521"/>
<dbReference type="BioCyc" id="BSUB:BSU24300-MONOMER"/>
<dbReference type="Proteomes" id="UP000001570">
    <property type="component" value="Chromosome"/>
</dbReference>
<dbReference type="GO" id="GO:0005737">
    <property type="term" value="C:cytoplasm"/>
    <property type="evidence" value="ECO:0007669"/>
    <property type="project" value="UniProtKB-SubCell"/>
</dbReference>
<dbReference type="GO" id="GO:0009318">
    <property type="term" value="C:exodeoxyribonuclease VII complex"/>
    <property type="evidence" value="ECO:0007669"/>
    <property type="project" value="InterPro"/>
</dbReference>
<dbReference type="GO" id="GO:0009295">
    <property type="term" value="C:nucleoid"/>
    <property type="evidence" value="ECO:0007669"/>
    <property type="project" value="UniProtKB-SubCell"/>
</dbReference>
<dbReference type="GO" id="GO:0008855">
    <property type="term" value="F:exodeoxyribonuclease VII activity"/>
    <property type="evidence" value="ECO:0007669"/>
    <property type="project" value="UniProtKB-UniRule"/>
</dbReference>
<dbReference type="GO" id="GO:0003676">
    <property type="term" value="F:nucleic acid binding"/>
    <property type="evidence" value="ECO:0007669"/>
    <property type="project" value="InterPro"/>
</dbReference>
<dbReference type="GO" id="GO:0006308">
    <property type="term" value="P:DNA catabolic process"/>
    <property type="evidence" value="ECO:0007669"/>
    <property type="project" value="UniProtKB-UniRule"/>
</dbReference>
<dbReference type="CDD" id="cd04489">
    <property type="entry name" value="ExoVII_LU_OBF"/>
    <property type="match status" value="1"/>
</dbReference>
<dbReference type="HAMAP" id="MF_00378">
    <property type="entry name" value="Exonuc_7_L"/>
    <property type="match status" value="1"/>
</dbReference>
<dbReference type="InterPro" id="IPR003753">
    <property type="entry name" value="Exonuc_VII_L"/>
</dbReference>
<dbReference type="InterPro" id="IPR020579">
    <property type="entry name" value="Exonuc_VII_lsu_C"/>
</dbReference>
<dbReference type="InterPro" id="IPR025824">
    <property type="entry name" value="OB-fold_nuc-bd_dom"/>
</dbReference>
<dbReference type="NCBIfam" id="TIGR00237">
    <property type="entry name" value="xseA"/>
    <property type="match status" value="1"/>
</dbReference>
<dbReference type="PANTHER" id="PTHR30008">
    <property type="entry name" value="EXODEOXYRIBONUCLEASE 7 LARGE SUBUNIT"/>
    <property type="match status" value="1"/>
</dbReference>
<dbReference type="PANTHER" id="PTHR30008:SF0">
    <property type="entry name" value="EXODEOXYRIBONUCLEASE 7 LARGE SUBUNIT"/>
    <property type="match status" value="1"/>
</dbReference>
<dbReference type="Pfam" id="PF02601">
    <property type="entry name" value="Exonuc_VII_L"/>
    <property type="match status" value="1"/>
</dbReference>
<dbReference type="Pfam" id="PF13742">
    <property type="entry name" value="tRNA_anti_2"/>
    <property type="match status" value="1"/>
</dbReference>
<evidence type="ECO:0000255" key="1">
    <source>
        <dbReference type="HAMAP-Rule" id="MF_00378"/>
    </source>
</evidence>
<evidence type="ECO:0000269" key="2">
    <source>
    </source>
</evidence>
<evidence type="ECO:0000305" key="3"/>
<organism>
    <name type="scientific">Bacillus subtilis (strain 168)</name>
    <dbReference type="NCBI Taxonomy" id="224308"/>
    <lineage>
        <taxon>Bacteria</taxon>
        <taxon>Bacillati</taxon>
        <taxon>Bacillota</taxon>
        <taxon>Bacilli</taxon>
        <taxon>Bacillales</taxon>
        <taxon>Bacillaceae</taxon>
        <taxon>Bacillus</taxon>
    </lineage>
</organism>
<reference key="1">
    <citation type="journal article" date="1996" name="Microbiology">
        <title>Systematic sequencing of the 283 kb 210 degrees-232 degrees region of the Bacillus subtilis genome containing the skin element and many sporulation genes.</title>
        <authorList>
            <person name="Mizuno M."/>
            <person name="Masuda S."/>
            <person name="Takemaru K."/>
            <person name="Hosono S."/>
            <person name="Sato T."/>
            <person name="Takeuchi M."/>
            <person name="Kobayashi Y."/>
        </authorList>
    </citation>
    <scope>NUCLEOTIDE SEQUENCE [GENOMIC DNA]</scope>
    <source>
        <strain>168 / JH642</strain>
    </source>
</reference>
<reference key="2">
    <citation type="journal article" date="1997" name="Nature">
        <title>The complete genome sequence of the Gram-positive bacterium Bacillus subtilis.</title>
        <authorList>
            <person name="Kunst F."/>
            <person name="Ogasawara N."/>
            <person name="Moszer I."/>
            <person name="Albertini A.M."/>
            <person name="Alloni G."/>
            <person name="Azevedo V."/>
            <person name="Bertero M.G."/>
            <person name="Bessieres P."/>
            <person name="Bolotin A."/>
            <person name="Borchert S."/>
            <person name="Borriss R."/>
            <person name="Boursier L."/>
            <person name="Brans A."/>
            <person name="Braun M."/>
            <person name="Brignell S.C."/>
            <person name="Bron S."/>
            <person name="Brouillet S."/>
            <person name="Bruschi C.V."/>
            <person name="Caldwell B."/>
            <person name="Capuano V."/>
            <person name="Carter N.M."/>
            <person name="Choi S.-K."/>
            <person name="Codani J.-J."/>
            <person name="Connerton I.F."/>
            <person name="Cummings N.J."/>
            <person name="Daniel R.A."/>
            <person name="Denizot F."/>
            <person name="Devine K.M."/>
            <person name="Duesterhoeft A."/>
            <person name="Ehrlich S.D."/>
            <person name="Emmerson P.T."/>
            <person name="Entian K.-D."/>
            <person name="Errington J."/>
            <person name="Fabret C."/>
            <person name="Ferrari E."/>
            <person name="Foulger D."/>
            <person name="Fritz C."/>
            <person name="Fujita M."/>
            <person name="Fujita Y."/>
            <person name="Fuma S."/>
            <person name="Galizzi A."/>
            <person name="Galleron N."/>
            <person name="Ghim S.-Y."/>
            <person name="Glaser P."/>
            <person name="Goffeau A."/>
            <person name="Golightly E.J."/>
            <person name="Grandi G."/>
            <person name="Guiseppi G."/>
            <person name="Guy B.J."/>
            <person name="Haga K."/>
            <person name="Haiech J."/>
            <person name="Harwood C.R."/>
            <person name="Henaut A."/>
            <person name="Hilbert H."/>
            <person name="Holsappel S."/>
            <person name="Hosono S."/>
            <person name="Hullo M.-F."/>
            <person name="Itaya M."/>
            <person name="Jones L.-M."/>
            <person name="Joris B."/>
            <person name="Karamata D."/>
            <person name="Kasahara Y."/>
            <person name="Klaerr-Blanchard M."/>
            <person name="Klein C."/>
            <person name="Kobayashi Y."/>
            <person name="Koetter P."/>
            <person name="Koningstein G."/>
            <person name="Krogh S."/>
            <person name="Kumano M."/>
            <person name="Kurita K."/>
            <person name="Lapidus A."/>
            <person name="Lardinois S."/>
            <person name="Lauber J."/>
            <person name="Lazarevic V."/>
            <person name="Lee S.-M."/>
            <person name="Levine A."/>
            <person name="Liu H."/>
            <person name="Masuda S."/>
            <person name="Mauel C."/>
            <person name="Medigue C."/>
            <person name="Medina N."/>
            <person name="Mellado R.P."/>
            <person name="Mizuno M."/>
            <person name="Moestl D."/>
            <person name="Nakai S."/>
            <person name="Noback M."/>
            <person name="Noone D."/>
            <person name="O'Reilly M."/>
            <person name="Ogawa K."/>
            <person name="Ogiwara A."/>
            <person name="Oudega B."/>
            <person name="Park S.-H."/>
            <person name="Parro V."/>
            <person name="Pohl T.M."/>
            <person name="Portetelle D."/>
            <person name="Porwollik S."/>
            <person name="Prescott A.M."/>
            <person name="Presecan E."/>
            <person name="Pujic P."/>
            <person name="Purnelle B."/>
            <person name="Rapoport G."/>
            <person name="Rey M."/>
            <person name="Reynolds S."/>
            <person name="Rieger M."/>
            <person name="Rivolta C."/>
            <person name="Rocha E."/>
            <person name="Roche B."/>
            <person name="Rose M."/>
            <person name="Sadaie Y."/>
            <person name="Sato T."/>
            <person name="Scanlan E."/>
            <person name="Schleich S."/>
            <person name="Schroeter R."/>
            <person name="Scoffone F."/>
            <person name="Sekiguchi J."/>
            <person name="Sekowska A."/>
            <person name="Seror S.J."/>
            <person name="Serror P."/>
            <person name="Shin B.-S."/>
            <person name="Soldo B."/>
            <person name="Sorokin A."/>
            <person name="Tacconi E."/>
            <person name="Takagi T."/>
            <person name="Takahashi H."/>
            <person name="Takemaru K."/>
            <person name="Takeuchi M."/>
            <person name="Tamakoshi A."/>
            <person name="Tanaka T."/>
            <person name="Terpstra P."/>
            <person name="Tognoni A."/>
            <person name="Tosato V."/>
            <person name="Uchiyama S."/>
            <person name="Vandenbol M."/>
            <person name="Vannier F."/>
            <person name="Vassarotti A."/>
            <person name="Viari A."/>
            <person name="Wambutt R."/>
            <person name="Wedler E."/>
            <person name="Wedler H."/>
            <person name="Weitzenegger T."/>
            <person name="Winters P."/>
            <person name="Wipat A."/>
            <person name="Yamamoto H."/>
            <person name="Yamane K."/>
            <person name="Yasumoto K."/>
            <person name="Yata K."/>
            <person name="Yoshida K."/>
            <person name="Yoshikawa H.-F."/>
            <person name="Zumstein E."/>
            <person name="Yoshikawa H."/>
            <person name="Danchin A."/>
        </authorList>
    </citation>
    <scope>NUCLEOTIDE SEQUENCE [LARGE SCALE GENOMIC DNA]</scope>
    <source>
        <strain>168</strain>
    </source>
</reference>
<reference key="3">
    <citation type="journal article" date="2009" name="Microbiology">
        <title>From a consortium sequence to a unified sequence: the Bacillus subtilis 168 reference genome a decade later.</title>
        <authorList>
            <person name="Barbe V."/>
            <person name="Cruveiller S."/>
            <person name="Kunst F."/>
            <person name="Lenoble P."/>
            <person name="Meurice G."/>
            <person name="Sekowska A."/>
            <person name="Vallenet D."/>
            <person name="Wang T."/>
            <person name="Moszer I."/>
            <person name="Medigue C."/>
            <person name="Danchin A."/>
        </authorList>
    </citation>
    <scope>SEQUENCE REVISION TO 52-55 AND 291-293</scope>
</reference>
<reference key="4">
    <citation type="journal article" date="2010" name="PLoS Genet.">
        <title>The C-terminal domain of the bacterial SSB protein acts as a DNA maintenance hub at active chromosome replication forks.</title>
        <authorList>
            <person name="Costes A."/>
            <person name="Lecointe F."/>
            <person name="McGovern S."/>
            <person name="Quevillon-Cheruel S."/>
            <person name="Polard P."/>
        </authorList>
    </citation>
    <scope>SUBCELLULAR LOCATION</scope>
    <source>
        <strain>168</strain>
    </source>
</reference>
<feature type="chain" id="PRO_0000197828" description="Exodeoxyribonuclease 7 large subunit">
    <location>
        <begin position="1"/>
        <end position="448"/>
    </location>
</feature>
<feature type="sequence conflict" description="In Ref. 1; BAA12573." evidence="3" ref="1">
    <original>DENA</original>
    <variation>ERKG</variation>
    <location>
        <begin position="52"/>
        <end position="55"/>
    </location>
</feature>
<feature type="sequence conflict" description="In Ref. 1; BAA12573." evidence="3" ref="1">
    <original>KKE</original>
    <variation>EKG</variation>
    <location>
        <begin position="291"/>
        <end position="293"/>
    </location>
</feature>